<accession>A7GM89</accession>
<feature type="chain" id="PRO_0000369645" description="UPF0738 protein Bcer98_0913">
    <location>
        <begin position="1"/>
        <end position="123"/>
    </location>
</feature>
<gene>
    <name type="ordered locus">Bcer98_0913</name>
</gene>
<dbReference type="EMBL" id="CP000764">
    <property type="protein sequence ID" value="ABS21247.1"/>
    <property type="molecule type" value="Genomic_DNA"/>
</dbReference>
<dbReference type="RefSeq" id="WP_011984000.1">
    <property type="nucleotide sequence ID" value="NC_009674.1"/>
</dbReference>
<dbReference type="STRING" id="315749.Bcer98_0913"/>
<dbReference type="GeneID" id="33896278"/>
<dbReference type="KEGG" id="bcy:Bcer98_0913"/>
<dbReference type="eggNOG" id="ENOG5032YMN">
    <property type="taxonomic scope" value="Bacteria"/>
</dbReference>
<dbReference type="HOGENOM" id="CLU_142282_0_0_9"/>
<dbReference type="OrthoDB" id="2966478at2"/>
<dbReference type="Proteomes" id="UP000002300">
    <property type="component" value="Chromosome"/>
</dbReference>
<dbReference type="HAMAP" id="MF_01861">
    <property type="entry name" value="UPF0738"/>
    <property type="match status" value="1"/>
</dbReference>
<dbReference type="InterPro" id="IPR020908">
    <property type="entry name" value="UPF0738"/>
</dbReference>
<dbReference type="Pfam" id="PF19785">
    <property type="entry name" value="UPF0738"/>
    <property type="match status" value="1"/>
</dbReference>
<comment type="similarity">
    <text evidence="1">Belongs to the UPF0738 family.</text>
</comment>
<evidence type="ECO:0000255" key="1">
    <source>
        <dbReference type="HAMAP-Rule" id="MF_01861"/>
    </source>
</evidence>
<reference key="1">
    <citation type="journal article" date="2008" name="Chem. Biol. Interact.">
        <title>Extending the Bacillus cereus group genomics to putative food-borne pathogens of different toxicity.</title>
        <authorList>
            <person name="Lapidus A."/>
            <person name="Goltsman E."/>
            <person name="Auger S."/>
            <person name="Galleron N."/>
            <person name="Segurens B."/>
            <person name="Dossat C."/>
            <person name="Land M.L."/>
            <person name="Broussolle V."/>
            <person name="Brillard J."/>
            <person name="Guinebretiere M.-H."/>
            <person name="Sanchis V."/>
            <person name="Nguen-the C."/>
            <person name="Lereclus D."/>
            <person name="Richardson P."/>
            <person name="Wincker P."/>
            <person name="Weissenbach J."/>
            <person name="Ehrlich S.D."/>
            <person name="Sorokin A."/>
        </authorList>
    </citation>
    <scope>NUCLEOTIDE SEQUENCE [LARGE SCALE GENOMIC DNA]</scope>
    <source>
        <strain>DSM 22905 / CIP 110041 / 391-98 / NVH 391-98</strain>
    </source>
</reference>
<organism>
    <name type="scientific">Bacillus cytotoxicus (strain DSM 22905 / CIP 110041 / 391-98 / NVH 391-98)</name>
    <dbReference type="NCBI Taxonomy" id="315749"/>
    <lineage>
        <taxon>Bacteria</taxon>
        <taxon>Bacillati</taxon>
        <taxon>Bacillota</taxon>
        <taxon>Bacilli</taxon>
        <taxon>Bacillales</taxon>
        <taxon>Bacillaceae</taxon>
        <taxon>Bacillus</taxon>
        <taxon>Bacillus cereus group</taxon>
    </lineage>
</organism>
<protein>
    <recommendedName>
        <fullName evidence="1">UPF0738 protein Bcer98_0913</fullName>
    </recommendedName>
</protein>
<sequence length="123" mass="14438">MQNKIQVKSVKERENALIFCAENTEIEVKELTARNHVLVDSDHLSFLYILENESSFVYVSIPHTCWEAMREAMQQDKKMFVHVNDMEIELEQLKEELEYLIRNIEGNANYGEELVSAVEKVFL</sequence>
<proteinExistence type="inferred from homology"/>
<name>Y913_BACCN</name>